<accession>A3CXU2</accession>
<comment type="similarity">
    <text evidence="1">Belongs to the UPF0210 family.</text>
</comment>
<gene>
    <name type="ordered locus">Memar_2269</name>
</gene>
<protein>
    <recommendedName>
        <fullName evidence="1">UPF0210 protein Memar_2269</fullName>
    </recommendedName>
</protein>
<reference key="1">
    <citation type="journal article" date="2009" name="Stand. Genomic Sci.">
        <title>Complete genome sequence of Methanoculleus marisnigri Romesser et al. 1981 type strain JR1.</title>
        <authorList>
            <person name="Anderson I.J."/>
            <person name="Sieprawska-Lupa M."/>
            <person name="Lapidus A."/>
            <person name="Nolan M."/>
            <person name="Copeland A."/>
            <person name="Glavina Del Rio T."/>
            <person name="Tice H."/>
            <person name="Dalin E."/>
            <person name="Barry K."/>
            <person name="Saunders E."/>
            <person name="Han C."/>
            <person name="Brettin T."/>
            <person name="Detter J.C."/>
            <person name="Bruce D."/>
            <person name="Mikhailova N."/>
            <person name="Pitluck S."/>
            <person name="Hauser L."/>
            <person name="Land M."/>
            <person name="Lucas S."/>
            <person name="Richardson P."/>
            <person name="Whitman W.B."/>
            <person name="Kyrpides N.C."/>
        </authorList>
    </citation>
    <scope>NUCLEOTIDE SEQUENCE [LARGE SCALE GENOMIC DNA]</scope>
    <source>
        <strain>ATCC 35101 / DSM 1498 / JR1</strain>
    </source>
</reference>
<name>Y2269_METMJ</name>
<feature type="chain" id="PRO_1000066767" description="UPF0210 protein Memar_2269">
    <location>
        <begin position="1"/>
        <end position="454"/>
    </location>
</feature>
<evidence type="ECO:0000255" key="1">
    <source>
        <dbReference type="HAMAP-Rule" id="MF_01221"/>
    </source>
</evidence>
<organism>
    <name type="scientific">Methanoculleus marisnigri (strain ATCC 35101 / DSM 1498 / JR1)</name>
    <dbReference type="NCBI Taxonomy" id="368407"/>
    <lineage>
        <taxon>Archaea</taxon>
        <taxon>Methanobacteriati</taxon>
        <taxon>Methanobacteriota</taxon>
        <taxon>Stenosarchaea group</taxon>
        <taxon>Methanomicrobia</taxon>
        <taxon>Methanomicrobiales</taxon>
        <taxon>Methanomicrobiaceae</taxon>
        <taxon>Methanoculleus</taxon>
    </lineage>
</organism>
<dbReference type="EMBL" id="CP000562">
    <property type="protein sequence ID" value="ABN58192.1"/>
    <property type="molecule type" value="Genomic_DNA"/>
</dbReference>
<dbReference type="RefSeq" id="WP_011845101.1">
    <property type="nucleotide sequence ID" value="NC_009051.1"/>
</dbReference>
<dbReference type="SMR" id="A3CXU2"/>
<dbReference type="STRING" id="368407.Memar_2269"/>
<dbReference type="GeneID" id="4847772"/>
<dbReference type="KEGG" id="mem:Memar_2269"/>
<dbReference type="eggNOG" id="arCOG04321">
    <property type="taxonomic scope" value="Archaea"/>
</dbReference>
<dbReference type="HOGENOM" id="CLU_048704_0_0_2"/>
<dbReference type="OrthoDB" id="21376at2157"/>
<dbReference type="Proteomes" id="UP000002146">
    <property type="component" value="Chromosome"/>
</dbReference>
<dbReference type="CDD" id="cd08025">
    <property type="entry name" value="RNR_PFL_like_DUF711"/>
    <property type="match status" value="1"/>
</dbReference>
<dbReference type="Gene3D" id="3.20.70.20">
    <property type="match status" value="1"/>
</dbReference>
<dbReference type="HAMAP" id="MF_01221">
    <property type="entry name" value="UPF0210"/>
    <property type="match status" value="1"/>
</dbReference>
<dbReference type="InterPro" id="IPR007841">
    <property type="entry name" value="UPF0210"/>
</dbReference>
<dbReference type="NCBIfam" id="NF003700">
    <property type="entry name" value="PRK05313.1"/>
    <property type="match status" value="1"/>
</dbReference>
<dbReference type="PANTHER" id="PTHR37560:SF1">
    <property type="entry name" value="UPF0210 PROTEIN MJ1665"/>
    <property type="match status" value="1"/>
</dbReference>
<dbReference type="PANTHER" id="PTHR37560">
    <property type="entry name" value="UPF0210 PROTEIN SPR0218"/>
    <property type="match status" value="1"/>
</dbReference>
<dbReference type="Pfam" id="PF05167">
    <property type="entry name" value="DUF711"/>
    <property type="match status" value="1"/>
</dbReference>
<dbReference type="SUPFAM" id="SSF51998">
    <property type="entry name" value="PFL-like glycyl radical enzymes"/>
    <property type="match status" value="1"/>
</dbReference>
<proteinExistence type="inferred from homology"/>
<sequence length="454" mass="47474">MINILEVNETNKMIEQEKLDVRTITLGISLLDCCDSDLDAFNRNIYDKITRLGKDLVSTGREIELEYGIPIVNKRISVTPIALVAGRACRSEEDFVEVAKTLDKAARDTGVNFLGGYSAIVSKGTTPTDEALIRSIPAALAATGRVCSSVNIGSTKTGINMDAVKLMGEIVRETAEATKENNSLGCAKLVVFCNAPDDNPFMAGAFHGVSEADAVINVGVSGPGVIKHALEDVRGKNFEVLCETVKRTAFKVTRAGQLVAQEASERLGIPFGIVDLSLAPTPSVGDSVAGILEEMGLESVGAPGTTAALALLNDQVKKGGIMASSFVGGLSGAFIPVSEDQGMIDAVNRGALTIEKLEAMTCVCSVGLDMIAIPGDTPASTISGIIADEAAIGMINNKTTAVRLIPVIGKDLGDTVEFGGLLGHAPVQRVNGFGCADFINRGGRIPAPIHSFKN</sequence>